<comment type="function">
    <text evidence="1">Catalyzes the NADPH-dependent reduction of glutamyl-tRNA(Glu) to glutamate 1-semialdehyde (GSA).</text>
</comment>
<comment type="catalytic activity">
    <reaction evidence="1">
        <text>(S)-4-amino-5-oxopentanoate + tRNA(Glu) + NADP(+) = L-glutamyl-tRNA(Glu) + NADPH + H(+)</text>
        <dbReference type="Rhea" id="RHEA:12344"/>
        <dbReference type="Rhea" id="RHEA-COMP:9663"/>
        <dbReference type="Rhea" id="RHEA-COMP:9680"/>
        <dbReference type="ChEBI" id="CHEBI:15378"/>
        <dbReference type="ChEBI" id="CHEBI:57501"/>
        <dbReference type="ChEBI" id="CHEBI:57783"/>
        <dbReference type="ChEBI" id="CHEBI:58349"/>
        <dbReference type="ChEBI" id="CHEBI:78442"/>
        <dbReference type="ChEBI" id="CHEBI:78520"/>
        <dbReference type="EC" id="1.2.1.70"/>
    </reaction>
</comment>
<comment type="pathway">
    <text evidence="1">Porphyrin-containing compound metabolism; protoporphyrin-IX biosynthesis; 5-aminolevulinate from L-glutamyl-tRNA(Glu): step 1/2.</text>
</comment>
<comment type="pathway">
    <text evidence="1">Porphyrin-containing compound metabolism; chlorophyll biosynthesis.</text>
</comment>
<comment type="subunit">
    <text evidence="1">Homodimer.</text>
</comment>
<comment type="domain">
    <text evidence="1">Possesses an unusual extended V-shaped dimeric structure with each monomer consisting of three distinct domains arranged along a curved 'spinal' alpha-helix. The N-terminal catalytic domain specifically recognizes the glutamate moiety of the substrate. The second domain is the NADPH-binding domain, and the third C-terminal domain is responsible for dimerization.</text>
</comment>
<comment type="miscellaneous">
    <text evidence="1">During catalysis, the active site Cys acts as a nucleophile attacking the alpha-carbonyl group of tRNA-bound glutamate with the formation of a thioester intermediate between enzyme and glutamate, and the concomitant release of tRNA(Glu). The thioester intermediate is finally reduced by direct hydride transfer from NADPH, to form the product GSA.</text>
</comment>
<comment type="similarity">
    <text evidence="1">Belongs to the glutamyl-tRNA reductase family.</text>
</comment>
<protein>
    <recommendedName>
        <fullName evidence="1">Glutamyl-tRNA reductase</fullName>
        <shortName evidence="1">GluTR</shortName>
        <ecNumber evidence="1">1.2.1.70</ecNumber>
    </recommendedName>
</protein>
<reference key="1">
    <citation type="submission" date="2006-05" db="EMBL/GenBank/DDBJ databases">
        <authorList>
            <consortium name="Genoscope"/>
        </authorList>
    </citation>
    <scope>NUCLEOTIDE SEQUENCE [LARGE SCALE GENOMIC DNA]</scope>
    <source>
        <strain>RCC307</strain>
    </source>
</reference>
<organism>
    <name type="scientific">Synechococcus sp. (strain RCC307)</name>
    <dbReference type="NCBI Taxonomy" id="316278"/>
    <lineage>
        <taxon>Bacteria</taxon>
        <taxon>Bacillati</taxon>
        <taxon>Cyanobacteriota</taxon>
        <taxon>Cyanophyceae</taxon>
        <taxon>Synechococcales</taxon>
        <taxon>Synechococcaceae</taxon>
        <taxon>Synechococcus</taxon>
    </lineage>
</organism>
<feature type="chain" id="PRO_1000004712" description="Glutamyl-tRNA reductase">
    <location>
        <begin position="1"/>
        <end position="442"/>
    </location>
</feature>
<feature type="region of interest" description="Disordered" evidence="2">
    <location>
        <begin position="420"/>
        <end position="442"/>
    </location>
</feature>
<feature type="compositionally biased region" description="Basic and acidic residues" evidence="2">
    <location>
        <begin position="433"/>
        <end position="442"/>
    </location>
</feature>
<feature type="active site" description="Nucleophile" evidence="1">
    <location>
        <position position="50"/>
    </location>
</feature>
<feature type="binding site" evidence="1">
    <location>
        <begin position="49"/>
        <end position="52"/>
    </location>
    <ligand>
        <name>substrate</name>
    </ligand>
</feature>
<feature type="binding site" evidence="1">
    <location>
        <position position="109"/>
    </location>
    <ligand>
        <name>substrate</name>
    </ligand>
</feature>
<feature type="binding site" evidence="1">
    <location>
        <begin position="114"/>
        <end position="116"/>
    </location>
    <ligand>
        <name>substrate</name>
    </ligand>
</feature>
<feature type="binding site" evidence="1">
    <location>
        <position position="120"/>
    </location>
    <ligand>
        <name>substrate</name>
    </ligand>
</feature>
<feature type="binding site" evidence="1">
    <location>
        <begin position="198"/>
        <end position="203"/>
    </location>
    <ligand>
        <name>NADP(+)</name>
        <dbReference type="ChEBI" id="CHEBI:58349"/>
    </ligand>
</feature>
<feature type="site" description="Important for activity" evidence="1">
    <location>
        <position position="99"/>
    </location>
</feature>
<evidence type="ECO:0000255" key="1">
    <source>
        <dbReference type="HAMAP-Rule" id="MF_00087"/>
    </source>
</evidence>
<evidence type="ECO:0000256" key="2">
    <source>
        <dbReference type="SAM" id="MobiDB-lite"/>
    </source>
</evidence>
<sequence length="442" mass="48791">MHLAVVGLSHRTAPVEVRERLSIPEHHLETSLQSLRSHEQVLETSILSTCNRLEIYSLLRHPEDGVEAIRDFLANHSGLADPDLQPHLFALHHEEAIQHLLRVSAGLDSLVLGEGQILSQVKKMYRLGQDHKSIGPILNRLLNQAVSTGKRVRSETNLGSGAVSISSAAVELAQLKVGQEQGVDDLVSLSQEKVAVVGAGRMARLLLQHLQSKGARSITVVNRTVAKAEVLAKDFPDLVITCCGLDQLDAQLASNTLLFTSTGADEPIIDRQRLDAITRQARLMLVDIGVPRNISSDAADVSGTLSYDVDDLQEVVERNVAARQQLAQQAEVLLDEDRQAFLDWWDGLEAVPTINRMRQQFEEIRKQELLKALSRMGSDFSQREKQVVEALTKGLINKILHGPTTALRAPQPRQQRLDSMAAAQRLFDLPGDDADRDRSDAK</sequence>
<gene>
    <name evidence="1" type="primary">hemA</name>
    <name type="ordered locus">SynRCC307_1254</name>
</gene>
<proteinExistence type="inferred from homology"/>
<keyword id="KW-0149">Chlorophyll biosynthesis</keyword>
<keyword id="KW-0521">NADP</keyword>
<keyword id="KW-0560">Oxidoreductase</keyword>
<keyword id="KW-0627">Porphyrin biosynthesis</keyword>
<keyword id="KW-1185">Reference proteome</keyword>
<name>HEM1_SYNR3</name>
<dbReference type="EC" id="1.2.1.70" evidence="1"/>
<dbReference type="EMBL" id="CT978603">
    <property type="protein sequence ID" value="CAK28157.1"/>
    <property type="molecule type" value="Genomic_DNA"/>
</dbReference>
<dbReference type="SMR" id="A5GTE8"/>
<dbReference type="STRING" id="316278.SynRCC307_1254"/>
<dbReference type="KEGG" id="syr:SynRCC307_1254"/>
<dbReference type="eggNOG" id="COG0373">
    <property type="taxonomic scope" value="Bacteria"/>
</dbReference>
<dbReference type="HOGENOM" id="CLU_035113_2_1_3"/>
<dbReference type="OrthoDB" id="110209at2"/>
<dbReference type="UniPathway" id="UPA00251">
    <property type="reaction ID" value="UER00316"/>
</dbReference>
<dbReference type="UniPathway" id="UPA00668"/>
<dbReference type="Proteomes" id="UP000001115">
    <property type="component" value="Chromosome"/>
</dbReference>
<dbReference type="GO" id="GO:0008883">
    <property type="term" value="F:glutamyl-tRNA reductase activity"/>
    <property type="evidence" value="ECO:0007669"/>
    <property type="project" value="UniProtKB-UniRule"/>
</dbReference>
<dbReference type="GO" id="GO:0050661">
    <property type="term" value="F:NADP binding"/>
    <property type="evidence" value="ECO:0007669"/>
    <property type="project" value="InterPro"/>
</dbReference>
<dbReference type="GO" id="GO:0015995">
    <property type="term" value="P:chlorophyll biosynthetic process"/>
    <property type="evidence" value="ECO:0007669"/>
    <property type="project" value="UniProtKB-UniRule"/>
</dbReference>
<dbReference type="GO" id="GO:0006782">
    <property type="term" value="P:protoporphyrinogen IX biosynthetic process"/>
    <property type="evidence" value="ECO:0007669"/>
    <property type="project" value="UniProtKB-UniRule"/>
</dbReference>
<dbReference type="CDD" id="cd05213">
    <property type="entry name" value="NAD_bind_Glutamyl_tRNA_reduct"/>
    <property type="match status" value="1"/>
</dbReference>
<dbReference type="FunFam" id="3.30.460.30:FF:000001">
    <property type="entry name" value="Glutamyl-tRNA reductase"/>
    <property type="match status" value="1"/>
</dbReference>
<dbReference type="Gene3D" id="3.30.460.30">
    <property type="entry name" value="Glutamyl-tRNA reductase, N-terminal domain"/>
    <property type="match status" value="1"/>
</dbReference>
<dbReference type="Gene3D" id="3.40.50.720">
    <property type="entry name" value="NAD(P)-binding Rossmann-like Domain"/>
    <property type="match status" value="1"/>
</dbReference>
<dbReference type="HAMAP" id="MF_00087">
    <property type="entry name" value="Glu_tRNA_reductase"/>
    <property type="match status" value="1"/>
</dbReference>
<dbReference type="InterPro" id="IPR000343">
    <property type="entry name" value="4pyrrol_synth_GluRdtase"/>
</dbReference>
<dbReference type="InterPro" id="IPR015896">
    <property type="entry name" value="4pyrrol_synth_GluRdtase_dimer"/>
</dbReference>
<dbReference type="InterPro" id="IPR015895">
    <property type="entry name" value="4pyrrol_synth_GluRdtase_N"/>
</dbReference>
<dbReference type="InterPro" id="IPR018214">
    <property type="entry name" value="GluRdtase_CS"/>
</dbReference>
<dbReference type="InterPro" id="IPR036453">
    <property type="entry name" value="GluRdtase_dimer_dom_sf"/>
</dbReference>
<dbReference type="InterPro" id="IPR036343">
    <property type="entry name" value="GluRdtase_N_sf"/>
</dbReference>
<dbReference type="InterPro" id="IPR036291">
    <property type="entry name" value="NAD(P)-bd_dom_sf"/>
</dbReference>
<dbReference type="InterPro" id="IPR006151">
    <property type="entry name" value="Shikm_DH/Glu-tRNA_Rdtase"/>
</dbReference>
<dbReference type="NCBIfam" id="TIGR01035">
    <property type="entry name" value="hemA"/>
    <property type="match status" value="1"/>
</dbReference>
<dbReference type="NCBIfam" id="NF000744">
    <property type="entry name" value="PRK00045.1-3"/>
    <property type="match status" value="1"/>
</dbReference>
<dbReference type="PANTHER" id="PTHR43120">
    <property type="entry name" value="GLUTAMYL-TRNA REDUCTASE 1, CHLOROPLASTIC"/>
    <property type="match status" value="1"/>
</dbReference>
<dbReference type="PANTHER" id="PTHR43120:SF1">
    <property type="entry name" value="GLUTAMYL-TRNA REDUCTASE 1, CHLOROPLASTIC"/>
    <property type="match status" value="1"/>
</dbReference>
<dbReference type="Pfam" id="PF00745">
    <property type="entry name" value="GlutR_dimer"/>
    <property type="match status" value="1"/>
</dbReference>
<dbReference type="Pfam" id="PF05201">
    <property type="entry name" value="GlutR_N"/>
    <property type="match status" value="1"/>
</dbReference>
<dbReference type="Pfam" id="PF01488">
    <property type="entry name" value="Shikimate_DH"/>
    <property type="match status" value="1"/>
</dbReference>
<dbReference type="PIRSF" id="PIRSF000445">
    <property type="entry name" value="4pyrrol_synth_GluRdtase"/>
    <property type="match status" value="1"/>
</dbReference>
<dbReference type="SUPFAM" id="SSF69742">
    <property type="entry name" value="Glutamyl tRNA-reductase catalytic, N-terminal domain"/>
    <property type="match status" value="1"/>
</dbReference>
<dbReference type="SUPFAM" id="SSF69075">
    <property type="entry name" value="Glutamyl tRNA-reductase dimerization domain"/>
    <property type="match status" value="1"/>
</dbReference>
<dbReference type="SUPFAM" id="SSF51735">
    <property type="entry name" value="NAD(P)-binding Rossmann-fold domains"/>
    <property type="match status" value="1"/>
</dbReference>
<dbReference type="PROSITE" id="PS00747">
    <property type="entry name" value="GLUTR"/>
    <property type="match status" value="1"/>
</dbReference>
<accession>A5GTE8</accession>